<reference key="1">
    <citation type="journal article" date="2005" name="Nucleic Acids Res.">
        <title>Genome dynamics and diversity of Shigella species, the etiologic agents of bacillary dysentery.</title>
        <authorList>
            <person name="Yang F."/>
            <person name="Yang J."/>
            <person name="Zhang X."/>
            <person name="Chen L."/>
            <person name="Jiang Y."/>
            <person name="Yan Y."/>
            <person name="Tang X."/>
            <person name="Wang J."/>
            <person name="Xiong Z."/>
            <person name="Dong J."/>
            <person name="Xue Y."/>
            <person name="Zhu Y."/>
            <person name="Xu X."/>
            <person name="Sun L."/>
            <person name="Chen S."/>
            <person name="Nie H."/>
            <person name="Peng J."/>
            <person name="Xu J."/>
            <person name="Wang Y."/>
            <person name="Yuan Z."/>
            <person name="Wen Y."/>
            <person name="Yao Z."/>
            <person name="Shen Y."/>
            <person name="Qiang B."/>
            <person name="Hou Y."/>
            <person name="Yu J."/>
            <person name="Jin Q."/>
        </authorList>
    </citation>
    <scope>NUCLEOTIDE SEQUENCE [LARGE SCALE GENOMIC DNA]</scope>
    <source>
        <strain>Ss046</strain>
    </source>
</reference>
<comment type="function">
    <text evidence="1">Required for accurate and efficient protein synthesis under certain stress conditions. May act as a fidelity factor of the translation reaction, by catalyzing a one-codon backward translocation of tRNAs on improperly translocated ribosomes. Back-translocation proceeds from a post-translocation (POST) complex to a pre-translocation (PRE) complex, thus giving elongation factor G a second chance to translocate the tRNAs correctly. Binds to ribosomes in a GTP-dependent manner.</text>
</comment>
<comment type="catalytic activity">
    <reaction evidence="1">
        <text>GTP + H2O = GDP + phosphate + H(+)</text>
        <dbReference type="Rhea" id="RHEA:19669"/>
        <dbReference type="ChEBI" id="CHEBI:15377"/>
        <dbReference type="ChEBI" id="CHEBI:15378"/>
        <dbReference type="ChEBI" id="CHEBI:37565"/>
        <dbReference type="ChEBI" id="CHEBI:43474"/>
        <dbReference type="ChEBI" id="CHEBI:58189"/>
        <dbReference type="EC" id="3.6.5.n1"/>
    </reaction>
</comment>
<comment type="subcellular location">
    <subcellularLocation>
        <location evidence="1">Cell inner membrane</location>
        <topology evidence="1">Peripheral membrane protein</topology>
        <orientation evidence="1">Cytoplasmic side</orientation>
    </subcellularLocation>
</comment>
<comment type="similarity">
    <text evidence="1">Belongs to the TRAFAC class translation factor GTPase superfamily. Classic translation factor GTPase family. LepA subfamily.</text>
</comment>
<keyword id="KW-0997">Cell inner membrane</keyword>
<keyword id="KW-1003">Cell membrane</keyword>
<keyword id="KW-0342">GTP-binding</keyword>
<keyword id="KW-0378">Hydrolase</keyword>
<keyword id="KW-0472">Membrane</keyword>
<keyword id="KW-0547">Nucleotide-binding</keyword>
<keyword id="KW-0648">Protein biosynthesis</keyword>
<keyword id="KW-1185">Reference proteome</keyword>
<organism>
    <name type="scientific">Shigella sonnei (strain Ss046)</name>
    <dbReference type="NCBI Taxonomy" id="300269"/>
    <lineage>
        <taxon>Bacteria</taxon>
        <taxon>Pseudomonadati</taxon>
        <taxon>Pseudomonadota</taxon>
        <taxon>Gammaproteobacteria</taxon>
        <taxon>Enterobacterales</taxon>
        <taxon>Enterobacteriaceae</taxon>
        <taxon>Shigella</taxon>
    </lineage>
</organism>
<proteinExistence type="inferred from homology"/>
<protein>
    <recommendedName>
        <fullName evidence="1">Elongation factor 4</fullName>
        <shortName evidence="1">EF-4</shortName>
        <ecNumber evidence="1">3.6.5.n1</ecNumber>
    </recommendedName>
    <alternativeName>
        <fullName evidence="1">Ribosomal back-translocase LepA</fullName>
    </alternativeName>
</protein>
<name>LEPA_SHISS</name>
<evidence type="ECO:0000255" key="1">
    <source>
        <dbReference type="HAMAP-Rule" id="MF_00071"/>
    </source>
</evidence>
<accession>Q3YYU7</accession>
<feature type="chain" id="PRO_0000224796" description="Elongation factor 4">
    <location>
        <begin position="1"/>
        <end position="599"/>
    </location>
</feature>
<feature type="domain" description="tr-type G">
    <location>
        <begin position="2"/>
        <end position="184"/>
    </location>
</feature>
<feature type="binding site" evidence="1">
    <location>
        <begin position="14"/>
        <end position="19"/>
    </location>
    <ligand>
        <name>GTP</name>
        <dbReference type="ChEBI" id="CHEBI:37565"/>
    </ligand>
</feature>
<feature type="binding site" evidence="1">
    <location>
        <begin position="131"/>
        <end position="134"/>
    </location>
    <ligand>
        <name>GTP</name>
        <dbReference type="ChEBI" id="CHEBI:37565"/>
    </ligand>
</feature>
<sequence>MKNIRNFSIIAHIDHGKSTLSDRIIQICGGLSDREMEAQVLDSMDLERERGITIKAQSVTLDYKASDGETYQLNFIDTPGHVDFSYEVSRSLAACEGALLVVDAGQGVEAQTLANCYTAMEMDLEVVPVLNKIDLPAADPERVAEEIEDIVGIDATDAVRCSAKTGVGVQDVLERLVRDIPPPEGDPEGSLQALIIDSWFDNYLGVVSLIRIKNGTLRKGDKVKVMSTGQTYNADRLGIFTPKQVDRTELKCGEVGWLVCAIKDIHGAPVGDTLTLARNPAEKALPGFKKVKPQVYAGLFPVSSDDYEAFRDALGKLSLNDASLFYEPESSSALGFGFRCGFLGLLHMEIIQERLEREYDLDLITTAPTVVYEVETTSREVIYVDSPSKLPAVNNIYELREPIAECHMLLPQAYLGNVITLCVEKRGVQTNMVYHGNQVALTYEIPMAEVVLDFFDRLKSTSRGYASLDYNFKRFQASDMVRVDVLINGERVDALALITHRDNSQNRGRELVEKMKDLIPRQQFDIAIQAAIGTHIIARSTVKQLRKNVLAKCYGGDISRKKKLLQKQKEGKKRMKQIGNVELPQEAFLAILHVGKDNK</sequence>
<gene>
    <name evidence="1" type="primary">lepA</name>
    <name type="ordered locus">SSON_2693</name>
</gene>
<dbReference type="EC" id="3.6.5.n1" evidence="1"/>
<dbReference type="EMBL" id="CP000038">
    <property type="protein sequence ID" value="AAZ89315.1"/>
    <property type="molecule type" value="Genomic_DNA"/>
</dbReference>
<dbReference type="RefSeq" id="WP_000790176.1">
    <property type="nucleotide sequence ID" value="NC_007384.1"/>
</dbReference>
<dbReference type="SMR" id="Q3YYU7"/>
<dbReference type="KEGG" id="ssn:SSON_2693"/>
<dbReference type="HOGENOM" id="CLU_009995_3_3_6"/>
<dbReference type="Proteomes" id="UP000002529">
    <property type="component" value="Chromosome"/>
</dbReference>
<dbReference type="GO" id="GO:0005886">
    <property type="term" value="C:plasma membrane"/>
    <property type="evidence" value="ECO:0007669"/>
    <property type="project" value="UniProtKB-SubCell"/>
</dbReference>
<dbReference type="GO" id="GO:0005525">
    <property type="term" value="F:GTP binding"/>
    <property type="evidence" value="ECO:0007669"/>
    <property type="project" value="UniProtKB-UniRule"/>
</dbReference>
<dbReference type="GO" id="GO:0003924">
    <property type="term" value="F:GTPase activity"/>
    <property type="evidence" value="ECO:0007669"/>
    <property type="project" value="UniProtKB-UniRule"/>
</dbReference>
<dbReference type="GO" id="GO:0097216">
    <property type="term" value="F:guanosine tetraphosphate binding"/>
    <property type="evidence" value="ECO:0007669"/>
    <property type="project" value="UniProtKB-ARBA"/>
</dbReference>
<dbReference type="GO" id="GO:0043022">
    <property type="term" value="F:ribosome binding"/>
    <property type="evidence" value="ECO:0007669"/>
    <property type="project" value="UniProtKB-UniRule"/>
</dbReference>
<dbReference type="GO" id="GO:0003746">
    <property type="term" value="F:translation elongation factor activity"/>
    <property type="evidence" value="ECO:0007669"/>
    <property type="project" value="UniProtKB-UniRule"/>
</dbReference>
<dbReference type="GO" id="GO:0045727">
    <property type="term" value="P:positive regulation of translation"/>
    <property type="evidence" value="ECO:0007669"/>
    <property type="project" value="UniProtKB-UniRule"/>
</dbReference>
<dbReference type="CDD" id="cd03699">
    <property type="entry name" value="EF4_II"/>
    <property type="match status" value="1"/>
</dbReference>
<dbReference type="CDD" id="cd16260">
    <property type="entry name" value="EF4_III"/>
    <property type="match status" value="1"/>
</dbReference>
<dbReference type="CDD" id="cd01890">
    <property type="entry name" value="LepA"/>
    <property type="match status" value="1"/>
</dbReference>
<dbReference type="CDD" id="cd03709">
    <property type="entry name" value="lepA_C"/>
    <property type="match status" value="1"/>
</dbReference>
<dbReference type="FunFam" id="3.30.70.240:FF:000005">
    <property type="entry name" value="Elongation factor 4"/>
    <property type="match status" value="1"/>
</dbReference>
<dbReference type="FunFam" id="3.40.50.300:FF:000078">
    <property type="entry name" value="Elongation factor 4"/>
    <property type="match status" value="1"/>
</dbReference>
<dbReference type="FunFam" id="2.40.30.10:FF:000015">
    <property type="entry name" value="Translation factor GUF1, mitochondrial"/>
    <property type="match status" value="1"/>
</dbReference>
<dbReference type="FunFam" id="3.30.70.2570:FF:000001">
    <property type="entry name" value="Translation factor GUF1, mitochondrial"/>
    <property type="match status" value="1"/>
</dbReference>
<dbReference type="FunFam" id="3.30.70.870:FF:000004">
    <property type="entry name" value="Translation factor GUF1, mitochondrial"/>
    <property type="match status" value="1"/>
</dbReference>
<dbReference type="Gene3D" id="3.30.70.240">
    <property type="match status" value="1"/>
</dbReference>
<dbReference type="Gene3D" id="3.30.70.2570">
    <property type="entry name" value="Elongation factor 4, C-terminal domain"/>
    <property type="match status" value="1"/>
</dbReference>
<dbReference type="Gene3D" id="3.30.70.870">
    <property type="entry name" value="Elongation Factor G (Translational Gtpase), domain 3"/>
    <property type="match status" value="1"/>
</dbReference>
<dbReference type="Gene3D" id="3.40.50.300">
    <property type="entry name" value="P-loop containing nucleotide triphosphate hydrolases"/>
    <property type="match status" value="1"/>
</dbReference>
<dbReference type="Gene3D" id="2.40.30.10">
    <property type="entry name" value="Translation factors"/>
    <property type="match status" value="1"/>
</dbReference>
<dbReference type="HAMAP" id="MF_00071">
    <property type="entry name" value="LepA"/>
    <property type="match status" value="1"/>
</dbReference>
<dbReference type="InterPro" id="IPR006297">
    <property type="entry name" value="EF-4"/>
</dbReference>
<dbReference type="InterPro" id="IPR035647">
    <property type="entry name" value="EFG_III/V"/>
</dbReference>
<dbReference type="InterPro" id="IPR000640">
    <property type="entry name" value="EFG_V-like"/>
</dbReference>
<dbReference type="InterPro" id="IPR004161">
    <property type="entry name" value="EFTu-like_2"/>
</dbReference>
<dbReference type="InterPro" id="IPR031157">
    <property type="entry name" value="G_TR_CS"/>
</dbReference>
<dbReference type="InterPro" id="IPR038363">
    <property type="entry name" value="LepA_C_sf"/>
</dbReference>
<dbReference type="InterPro" id="IPR013842">
    <property type="entry name" value="LepA_CTD"/>
</dbReference>
<dbReference type="InterPro" id="IPR035654">
    <property type="entry name" value="LepA_IV"/>
</dbReference>
<dbReference type="InterPro" id="IPR027417">
    <property type="entry name" value="P-loop_NTPase"/>
</dbReference>
<dbReference type="InterPro" id="IPR005225">
    <property type="entry name" value="Small_GTP-bd"/>
</dbReference>
<dbReference type="InterPro" id="IPR000795">
    <property type="entry name" value="T_Tr_GTP-bd_dom"/>
</dbReference>
<dbReference type="NCBIfam" id="TIGR01393">
    <property type="entry name" value="lepA"/>
    <property type="match status" value="1"/>
</dbReference>
<dbReference type="NCBIfam" id="TIGR00231">
    <property type="entry name" value="small_GTP"/>
    <property type="match status" value="1"/>
</dbReference>
<dbReference type="PANTHER" id="PTHR43512:SF4">
    <property type="entry name" value="TRANSLATION FACTOR GUF1 HOMOLOG, CHLOROPLASTIC"/>
    <property type="match status" value="1"/>
</dbReference>
<dbReference type="PANTHER" id="PTHR43512">
    <property type="entry name" value="TRANSLATION FACTOR GUF1-RELATED"/>
    <property type="match status" value="1"/>
</dbReference>
<dbReference type="Pfam" id="PF00679">
    <property type="entry name" value="EFG_C"/>
    <property type="match status" value="1"/>
</dbReference>
<dbReference type="Pfam" id="PF00009">
    <property type="entry name" value="GTP_EFTU"/>
    <property type="match status" value="1"/>
</dbReference>
<dbReference type="Pfam" id="PF03144">
    <property type="entry name" value="GTP_EFTU_D2"/>
    <property type="match status" value="1"/>
</dbReference>
<dbReference type="Pfam" id="PF06421">
    <property type="entry name" value="LepA_C"/>
    <property type="match status" value="1"/>
</dbReference>
<dbReference type="PRINTS" id="PR00315">
    <property type="entry name" value="ELONGATNFCT"/>
</dbReference>
<dbReference type="SUPFAM" id="SSF54980">
    <property type="entry name" value="EF-G C-terminal domain-like"/>
    <property type="match status" value="2"/>
</dbReference>
<dbReference type="SUPFAM" id="SSF52540">
    <property type="entry name" value="P-loop containing nucleoside triphosphate hydrolases"/>
    <property type="match status" value="1"/>
</dbReference>
<dbReference type="PROSITE" id="PS00301">
    <property type="entry name" value="G_TR_1"/>
    <property type="match status" value="1"/>
</dbReference>
<dbReference type="PROSITE" id="PS51722">
    <property type="entry name" value="G_TR_2"/>
    <property type="match status" value="1"/>
</dbReference>